<comment type="function">
    <text evidence="2">Component of the cytochrome b6-f complex, which mediates electron transfer between photosystem II (PSII) and photosystem I (PSI), cyclic electron flow around PSI, and state transitions.</text>
</comment>
<comment type="cofactor">
    <cofactor evidence="2">
        <name>heme</name>
        <dbReference type="ChEBI" id="CHEBI:30413"/>
    </cofactor>
    <text evidence="2">Binds 1 heme group covalently.</text>
</comment>
<comment type="subunit">
    <text evidence="1">The 4 large subunits of the cytochrome b6-f complex are cytochrome b6, subunit IV (17 kDa polypeptide, petD), cytochrome f and the Rieske protein, while the 4 small subunits are PetG, PetL, PetM and PetN. The complex functions as a dimer (By similarity).</text>
</comment>
<comment type="subcellular location">
    <subcellularLocation>
        <location evidence="2">Plastid</location>
        <location evidence="2">Chloroplast thylakoid membrane</location>
        <topology evidence="2">Single-pass membrane protein</topology>
    </subcellularLocation>
</comment>
<comment type="similarity">
    <text evidence="2">Belongs to the cytochrome f family.</text>
</comment>
<proteinExistence type="inferred from homology"/>
<evidence type="ECO:0000250" key="1"/>
<evidence type="ECO:0000255" key="2">
    <source>
        <dbReference type="HAMAP-Rule" id="MF_00610"/>
    </source>
</evidence>
<name>CYF_GRATL</name>
<sequence>MNIKLTLLVLISIINLMIIQPIQTLAFPIYAQQGYENPREATGRIVCANCHLAQKPIKIEAPKTVLPNSIFEAIVKIPYDTNNKQLLGNGIKGSINTGAVMILPEGFKLAPKNLLSEELREKTKNVYIQPYSTTKDNILLVGPLAGEKNQEIIFPILSPDPSKDKNIHFLKYPIYIGANRGRGQVYPTGDKSNNNPIVSLNTGKVTKIISLEKGGYKIEIEKDNGEIYTENIPQGLNLMVSQGSQVVANQNLTDDPNVGGFGQTEIEIVLQSPSRIKGMIVFFFTVTIAQIFFVLKKKQWEKVQAAEINF</sequence>
<dbReference type="EMBL" id="AY673996">
    <property type="protein sequence ID" value="AAT79705.1"/>
    <property type="molecule type" value="Genomic_DNA"/>
</dbReference>
<dbReference type="RefSeq" id="YP_063630.1">
    <property type="nucleotide sequence ID" value="NC_006137.1"/>
</dbReference>
<dbReference type="SMR" id="Q6B8T0"/>
<dbReference type="GeneID" id="2943940"/>
<dbReference type="GO" id="GO:0009535">
    <property type="term" value="C:chloroplast thylakoid membrane"/>
    <property type="evidence" value="ECO:0007669"/>
    <property type="project" value="UniProtKB-SubCell"/>
</dbReference>
<dbReference type="GO" id="GO:0009055">
    <property type="term" value="F:electron transfer activity"/>
    <property type="evidence" value="ECO:0007669"/>
    <property type="project" value="UniProtKB-UniRule"/>
</dbReference>
<dbReference type="GO" id="GO:0020037">
    <property type="term" value="F:heme binding"/>
    <property type="evidence" value="ECO:0007669"/>
    <property type="project" value="InterPro"/>
</dbReference>
<dbReference type="GO" id="GO:0005506">
    <property type="term" value="F:iron ion binding"/>
    <property type="evidence" value="ECO:0007669"/>
    <property type="project" value="InterPro"/>
</dbReference>
<dbReference type="GO" id="GO:0015979">
    <property type="term" value="P:photosynthesis"/>
    <property type="evidence" value="ECO:0007669"/>
    <property type="project" value="UniProtKB-UniRule"/>
</dbReference>
<dbReference type="FunFam" id="2.60.40.830:FF:000001">
    <property type="entry name" value="Cytochrome f"/>
    <property type="match status" value="1"/>
</dbReference>
<dbReference type="Gene3D" id="2.40.50.100">
    <property type="match status" value="1"/>
</dbReference>
<dbReference type="Gene3D" id="2.60.40.830">
    <property type="entry name" value="Cytochrome f large domain"/>
    <property type="match status" value="1"/>
</dbReference>
<dbReference type="Gene3D" id="1.20.5.700">
    <property type="entry name" value="Single helix bin"/>
    <property type="match status" value="1"/>
</dbReference>
<dbReference type="HAMAP" id="MF_00610">
    <property type="entry name" value="Cytb6_f_cytF"/>
    <property type="match status" value="1"/>
</dbReference>
<dbReference type="InterPro" id="IPR024058">
    <property type="entry name" value="Cyt-f_TM"/>
</dbReference>
<dbReference type="InterPro" id="IPR002325">
    <property type="entry name" value="Cyt_f"/>
</dbReference>
<dbReference type="InterPro" id="IPR024094">
    <property type="entry name" value="Cyt_f_lg_dom"/>
</dbReference>
<dbReference type="InterPro" id="IPR036826">
    <property type="entry name" value="Cyt_f_lg_dom_sf"/>
</dbReference>
<dbReference type="InterPro" id="IPR011054">
    <property type="entry name" value="Rudment_hybrid_motif"/>
</dbReference>
<dbReference type="PANTHER" id="PTHR33288">
    <property type="match status" value="1"/>
</dbReference>
<dbReference type="PANTHER" id="PTHR33288:SF10">
    <property type="entry name" value="CYTOCHROME F"/>
    <property type="match status" value="1"/>
</dbReference>
<dbReference type="Pfam" id="PF01333">
    <property type="entry name" value="Apocytochr_F_C"/>
    <property type="match status" value="1"/>
</dbReference>
<dbReference type="Pfam" id="PF16639">
    <property type="entry name" value="Apocytochr_F_N"/>
    <property type="match status" value="1"/>
</dbReference>
<dbReference type="PRINTS" id="PR00610">
    <property type="entry name" value="CYTOCHROMEF"/>
</dbReference>
<dbReference type="SUPFAM" id="SSF103431">
    <property type="entry name" value="Cytochrome f subunit of the cytochrome b6f complex, transmembrane anchor"/>
    <property type="match status" value="1"/>
</dbReference>
<dbReference type="SUPFAM" id="SSF49441">
    <property type="entry name" value="Cytochrome f, large domain"/>
    <property type="match status" value="1"/>
</dbReference>
<dbReference type="SUPFAM" id="SSF51246">
    <property type="entry name" value="Rudiment single hybrid motif"/>
    <property type="match status" value="1"/>
</dbReference>
<dbReference type="PROSITE" id="PS51010">
    <property type="entry name" value="CYTF"/>
    <property type="match status" value="1"/>
</dbReference>
<keyword id="KW-0150">Chloroplast</keyword>
<keyword id="KW-0249">Electron transport</keyword>
<keyword id="KW-0349">Heme</keyword>
<keyword id="KW-0408">Iron</keyword>
<keyword id="KW-0472">Membrane</keyword>
<keyword id="KW-0479">Metal-binding</keyword>
<keyword id="KW-0602">Photosynthesis</keyword>
<keyword id="KW-0934">Plastid</keyword>
<keyword id="KW-0732">Signal</keyword>
<keyword id="KW-0793">Thylakoid</keyword>
<keyword id="KW-0812">Transmembrane</keyword>
<keyword id="KW-1133">Transmembrane helix</keyword>
<keyword id="KW-0813">Transport</keyword>
<feature type="signal peptide" evidence="2">
    <location>
        <begin position="1"/>
        <end position="26"/>
    </location>
</feature>
<feature type="chain" id="PRO_0000023814" description="Cytochrome f">
    <location>
        <begin position="27"/>
        <end position="310"/>
    </location>
</feature>
<feature type="transmembrane region" description="Helical" evidence="2">
    <location>
        <begin position="276"/>
        <end position="296"/>
    </location>
</feature>
<feature type="binding site" description="axial binding residue" evidence="2">
    <location>
        <position position="27"/>
    </location>
    <ligand>
        <name>heme</name>
        <dbReference type="ChEBI" id="CHEBI:30413"/>
    </ligand>
    <ligandPart>
        <name>Fe</name>
        <dbReference type="ChEBI" id="CHEBI:18248"/>
    </ligandPart>
</feature>
<feature type="binding site" description="covalent" evidence="2">
    <location>
        <position position="47"/>
    </location>
    <ligand>
        <name>heme</name>
        <dbReference type="ChEBI" id="CHEBI:30413"/>
    </ligand>
</feature>
<feature type="binding site" description="covalent" evidence="2">
    <location>
        <position position="50"/>
    </location>
    <ligand>
        <name>heme</name>
        <dbReference type="ChEBI" id="CHEBI:30413"/>
    </ligand>
</feature>
<feature type="binding site" description="axial binding residue" evidence="2">
    <location>
        <position position="51"/>
    </location>
    <ligand>
        <name>heme</name>
        <dbReference type="ChEBI" id="CHEBI:30413"/>
    </ligand>
    <ligandPart>
        <name>Fe</name>
        <dbReference type="ChEBI" id="CHEBI:18248"/>
    </ligandPart>
</feature>
<geneLocation type="chloroplast"/>
<protein>
    <recommendedName>
        <fullName evidence="2">Cytochrome f</fullName>
    </recommendedName>
</protein>
<accession>Q6B8T0</accession>
<organism>
    <name type="scientific">Gracilaria tenuistipitata var. liui</name>
    <name type="common">Red alga</name>
    <dbReference type="NCBI Taxonomy" id="285951"/>
    <lineage>
        <taxon>Eukaryota</taxon>
        <taxon>Rhodophyta</taxon>
        <taxon>Florideophyceae</taxon>
        <taxon>Rhodymeniophycidae</taxon>
        <taxon>Gracilariales</taxon>
        <taxon>Gracilariaceae</taxon>
        <taxon>Gracilaria</taxon>
        <taxon>Gracilaria tenuistipitata</taxon>
    </lineage>
</organism>
<gene>
    <name evidence="2" type="primary">petA</name>
    <name type="ordered locus">Grc000124</name>
</gene>
<reference key="1">
    <citation type="journal article" date="2004" name="J. Mol. Evol.">
        <title>Comparative analysis of the complete plastid genome sequence of the red alga Gracilaria tenuistipitata var. liui provides insights into the evolution of rhodoplasts and their relationship to other plastids.</title>
        <authorList>
            <person name="Hagopian J.C."/>
            <person name="Reis M."/>
            <person name="Kitajima J.P."/>
            <person name="Bhattacharya D."/>
            <person name="de Oliveira M.C."/>
        </authorList>
    </citation>
    <scope>NUCLEOTIDE SEQUENCE [LARGE SCALE GENOMIC DNA]</scope>
</reference>